<reference key="1">
    <citation type="submission" date="2006-06" db="EMBL/GenBank/DDBJ databases">
        <title>Complete sequence of Pseudoalteromonas atlantica T6c.</title>
        <authorList>
            <consortium name="US DOE Joint Genome Institute"/>
            <person name="Copeland A."/>
            <person name="Lucas S."/>
            <person name="Lapidus A."/>
            <person name="Barry K."/>
            <person name="Detter J.C."/>
            <person name="Glavina del Rio T."/>
            <person name="Hammon N."/>
            <person name="Israni S."/>
            <person name="Dalin E."/>
            <person name="Tice H."/>
            <person name="Pitluck S."/>
            <person name="Saunders E."/>
            <person name="Brettin T."/>
            <person name="Bruce D."/>
            <person name="Han C."/>
            <person name="Tapia R."/>
            <person name="Gilna P."/>
            <person name="Schmutz J."/>
            <person name="Larimer F."/>
            <person name="Land M."/>
            <person name="Hauser L."/>
            <person name="Kyrpides N."/>
            <person name="Kim E."/>
            <person name="Karls A.C."/>
            <person name="Bartlett D."/>
            <person name="Higgins B.P."/>
            <person name="Richardson P."/>
        </authorList>
    </citation>
    <scope>NUCLEOTIDE SEQUENCE [LARGE SCALE GENOMIC DNA]</scope>
    <source>
        <strain>T6c / ATCC BAA-1087</strain>
    </source>
</reference>
<protein>
    <recommendedName>
        <fullName evidence="1">Large ribosomal subunit protein uL22</fullName>
    </recommendedName>
    <alternativeName>
        <fullName evidence="2">50S ribosomal protein L22</fullName>
    </alternativeName>
</protein>
<name>RL22_PSEA6</name>
<gene>
    <name evidence="1" type="primary">rplV</name>
    <name type="ordered locus">Patl_0474</name>
</gene>
<sequence>MEALATHRHARTSAQKARLVADQIRGLHVEKALELLAYSPKKSADLIKKVLESAIANAEHNEGADIDELTVSKVFVDEGPTMKRIKPRAKGRADRIFKRSSHITVVVADN</sequence>
<comment type="function">
    <text evidence="1">This protein binds specifically to 23S rRNA; its binding is stimulated by other ribosomal proteins, e.g. L4, L17, and L20. It is important during the early stages of 50S assembly. It makes multiple contacts with different domains of the 23S rRNA in the assembled 50S subunit and ribosome (By similarity).</text>
</comment>
<comment type="function">
    <text evidence="1">The globular domain of the protein is located near the polypeptide exit tunnel on the outside of the subunit, while an extended beta-hairpin is found that lines the wall of the exit tunnel in the center of the 70S ribosome.</text>
</comment>
<comment type="subunit">
    <text evidence="1">Part of the 50S ribosomal subunit.</text>
</comment>
<comment type="similarity">
    <text evidence="1">Belongs to the universal ribosomal protein uL22 family.</text>
</comment>
<evidence type="ECO:0000255" key="1">
    <source>
        <dbReference type="HAMAP-Rule" id="MF_01331"/>
    </source>
</evidence>
<evidence type="ECO:0000305" key="2"/>
<accession>Q15YN4</accession>
<organism>
    <name type="scientific">Pseudoalteromonas atlantica (strain T6c / ATCC BAA-1087)</name>
    <dbReference type="NCBI Taxonomy" id="3042615"/>
    <lineage>
        <taxon>Bacteria</taxon>
        <taxon>Pseudomonadati</taxon>
        <taxon>Pseudomonadota</taxon>
        <taxon>Gammaproteobacteria</taxon>
        <taxon>Alteromonadales</taxon>
        <taxon>Alteromonadaceae</taxon>
        <taxon>Paraglaciecola</taxon>
    </lineage>
</organism>
<keyword id="KW-0687">Ribonucleoprotein</keyword>
<keyword id="KW-0689">Ribosomal protein</keyword>
<keyword id="KW-0694">RNA-binding</keyword>
<keyword id="KW-0699">rRNA-binding</keyword>
<proteinExistence type="inferred from homology"/>
<feature type="chain" id="PRO_1000052626" description="Large ribosomal subunit protein uL22">
    <location>
        <begin position="1"/>
        <end position="110"/>
    </location>
</feature>
<dbReference type="EMBL" id="CP000388">
    <property type="protein sequence ID" value="ABG39004.1"/>
    <property type="molecule type" value="Genomic_DNA"/>
</dbReference>
<dbReference type="RefSeq" id="WP_006992673.1">
    <property type="nucleotide sequence ID" value="NC_008228.1"/>
</dbReference>
<dbReference type="SMR" id="Q15YN4"/>
<dbReference type="STRING" id="342610.Patl_0474"/>
<dbReference type="KEGG" id="pat:Patl_0474"/>
<dbReference type="eggNOG" id="COG0091">
    <property type="taxonomic scope" value="Bacteria"/>
</dbReference>
<dbReference type="HOGENOM" id="CLU_083987_3_3_6"/>
<dbReference type="OrthoDB" id="9805969at2"/>
<dbReference type="Proteomes" id="UP000001981">
    <property type="component" value="Chromosome"/>
</dbReference>
<dbReference type="GO" id="GO:0022625">
    <property type="term" value="C:cytosolic large ribosomal subunit"/>
    <property type="evidence" value="ECO:0007669"/>
    <property type="project" value="TreeGrafter"/>
</dbReference>
<dbReference type="GO" id="GO:0019843">
    <property type="term" value="F:rRNA binding"/>
    <property type="evidence" value="ECO:0007669"/>
    <property type="project" value="UniProtKB-UniRule"/>
</dbReference>
<dbReference type="GO" id="GO:0003735">
    <property type="term" value="F:structural constituent of ribosome"/>
    <property type="evidence" value="ECO:0007669"/>
    <property type="project" value="InterPro"/>
</dbReference>
<dbReference type="GO" id="GO:0006412">
    <property type="term" value="P:translation"/>
    <property type="evidence" value="ECO:0007669"/>
    <property type="project" value="UniProtKB-UniRule"/>
</dbReference>
<dbReference type="CDD" id="cd00336">
    <property type="entry name" value="Ribosomal_L22"/>
    <property type="match status" value="1"/>
</dbReference>
<dbReference type="FunFam" id="3.90.470.10:FF:000001">
    <property type="entry name" value="50S ribosomal protein L22"/>
    <property type="match status" value="1"/>
</dbReference>
<dbReference type="Gene3D" id="3.90.470.10">
    <property type="entry name" value="Ribosomal protein L22/L17"/>
    <property type="match status" value="1"/>
</dbReference>
<dbReference type="HAMAP" id="MF_01331_B">
    <property type="entry name" value="Ribosomal_uL22_B"/>
    <property type="match status" value="1"/>
</dbReference>
<dbReference type="InterPro" id="IPR001063">
    <property type="entry name" value="Ribosomal_uL22"/>
</dbReference>
<dbReference type="InterPro" id="IPR005727">
    <property type="entry name" value="Ribosomal_uL22_bac/chlpt-type"/>
</dbReference>
<dbReference type="InterPro" id="IPR047867">
    <property type="entry name" value="Ribosomal_uL22_bac/org-type"/>
</dbReference>
<dbReference type="InterPro" id="IPR018260">
    <property type="entry name" value="Ribosomal_uL22_CS"/>
</dbReference>
<dbReference type="InterPro" id="IPR036394">
    <property type="entry name" value="Ribosomal_uL22_sf"/>
</dbReference>
<dbReference type="NCBIfam" id="TIGR01044">
    <property type="entry name" value="rplV_bact"/>
    <property type="match status" value="1"/>
</dbReference>
<dbReference type="PANTHER" id="PTHR13501">
    <property type="entry name" value="CHLOROPLAST 50S RIBOSOMAL PROTEIN L22-RELATED"/>
    <property type="match status" value="1"/>
</dbReference>
<dbReference type="PANTHER" id="PTHR13501:SF8">
    <property type="entry name" value="LARGE RIBOSOMAL SUBUNIT PROTEIN UL22M"/>
    <property type="match status" value="1"/>
</dbReference>
<dbReference type="Pfam" id="PF00237">
    <property type="entry name" value="Ribosomal_L22"/>
    <property type="match status" value="1"/>
</dbReference>
<dbReference type="SUPFAM" id="SSF54843">
    <property type="entry name" value="Ribosomal protein L22"/>
    <property type="match status" value="1"/>
</dbReference>
<dbReference type="PROSITE" id="PS00464">
    <property type="entry name" value="RIBOSOMAL_L22"/>
    <property type="match status" value="1"/>
</dbReference>